<proteinExistence type="inferred from homology"/>
<sequence>MSKKLISIVDVKDYVGQEVTIGAWVANKSGKGKIAFVQLRDGSAFFQGVAFKPNFIEKYGEESGLEKFDVIKRLNQETSVYVTGIVKEDERSKFGYELDITDLEVIGESHEYPITPKEHGTDFLMDNRHLWLRSRKQMAVMQIRNAIIYSTYEFFDQNGFIKFDSPILSENAAEDSTELFETDYFGKPAFLSQSGQLYLEAGAMALGRVFDFGPVFRAEKSKTRRHLTEFWMMDAEYSFLSHEESLDLQEAYVKALIQGVLDRAPQALDILERDVEALKRYIAEPFKRVSYDDAITLLQEHEADEDTDYEHLEHGDDFGSPHETWISNYFGVPTFVVNYPASFKAFYMKPVPGNPERVLCADLLAPEGYGEIIGGSMREDDYDALVAKMDELGMDKSEYDFYLDLRKYGSVPHGGFGIGIERMVTFVAGTKHIREAIPFPRMLHRIKP</sequence>
<gene>
    <name evidence="1" type="primary">asnS</name>
    <name type="ordered locus">gbs0572</name>
</gene>
<accession>P67573</accession>
<accession>Q8E137</accession>
<accession>Q8E6J1</accession>
<organism>
    <name type="scientific">Streptococcus agalactiae serotype III (strain NEM316)</name>
    <dbReference type="NCBI Taxonomy" id="211110"/>
    <lineage>
        <taxon>Bacteria</taxon>
        <taxon>Bacillati</taxon>
        <taxon>Bacillota</taxon>
        <taxon>Bacilli</taxon>
        <taxon>Lactobacillales</taxon>
        <taxon>Streptococcaceae</taxon>
        <taxon>Streptococcus</taxon>
    </lineage>
</organism>
<name>SYN_STRA3</name>
<evidence type="ECO:0000255" key="1">
    <source>
        <dbReference type="HAMAP-Rule" id="MF_00534"/>
    </source>
</evidence>
<protein>
    <recommendedName>
        <fullName evidence="1">Asparagine--tRNA ligase</fullName>
        <ecNumber evidence="1">6.1.1.22</ecNumber>
    </recommendedName>
    <alternativeName>
        <fullName evidence="1">Asparaginyl-tRNA synthetase</fullName>
        <shortName evidence="1">AsnRS</shortName>
    </alternativeName>
</protein>
<dbReference type="EC" id="6.1.1.22" evidence="1"/>
<dbReference type="EMBL" id="AL766846">
    <property type="protein sequence ID" value="CAD46216.1"/>
    <property type="molecule type" value="Genomic_DNA"/>
</dbReference>
<dbReference type="RefSeq" id="WP_000038470.1">
    <property type="nucleotide sequence ID" value="NC_004368.1"/>
</dbReference>
<dbReference type="SMR" id="P67573"/>
<dbReference type="KEGG" id="san:gbs0572"/>
<dbReference type="eggNOG" id="COG0017">
    <property type="taxonomic scope" value="Bacteria"/>
</dbReference>
<dbReference type="HOGENOM" id="CLU_004553_2_0_9"/>
<dbReference type="Proteomes" id="UP000000823">
    <property type="component" value="Chromosome"/>
</dbReference>
<dbReference type="GO" id="GO:0005737">
    <property type="term" value="C:cytoplasm"/>
    <property type="evidence" value="ECO:0007669"/>
    <property type="project" value="UniProtKB-SubCell"/>
</dbReference>
<dbReference type="GO" id="GO:0004816">
    <property type="term" value="F:asparagine-tRNA ligase activity"/>
    <property type="evidence" value="ECO:0007669"/>
    <property type="project" value="UniProtKB-UniRule"/>
</dbReference>
<dbReference type="GO" id="GO:0005524">
    <property type="term" value="F:ATP binding"/>
    <property type="evidence" value="ECO:0007669"/>
    <property type="project" value="UniProtKB-UniRule"/>
</dbReference>
<dbReference type="GO" id="GO:0140096">
    <property type="term" value="F:catalytic activity, acting on a protein"/>
    <property type="evidence" value="ECO:0007669"/>
    <property type="project" value="UniProtKB-ARBA"/>
</dbReference>
<dbReference type="GO" id="GO:0003676">
    <property type="term" value="F:nucleic acid binding"/>
    <property type="evidence" value="ECO:0007669"/>
    <property type="project" value="InterPro"/>
</dbReference>
<dbReference type="GO" id="GO:0016740">
    <property type="term" value="F:transferase activity"/>
    <property type="evidence" value="ECO:0007669"/>
    <property type="project" value="UniProtKB-ARBA"/>
</dbReference>
<dbReference type="GO" id="GO:0006421">
    <property type="term" value="P:asparaginyl-tRNA aminoacylation"/>
    <property type="evidence" value="ECO:0007669"/>
    <property type="project" value="UniProtKB-UniRule"/>
</dbReference>
<dbReference type="CDD" id="cd04323">
    <property type="entry name" value="AsnRS_cyto_like_N"/>
    <property type="match status" value="1"/>
</dbReference>
<dbReference type="CDD" id="cd00776">
    <property type="entry name" value="AsxRS_core"/>
    <property type="match status" value="1"/>
</dbReference>
<dbReference type="Gene3D" id="3.30.930.10">
    <property type="entry name" value="Bira Bifunctional Protein, Domain 2"/>
    <property type="match status" value="1"/>
</dbReference>
<dbReference type="Gene3D" id="2.40.50.140">
    <property type="entry name" value="Nucleic acid-binding proteins"/>
    <property type="match status" value="1"/>
</dbReference>
<dbReference type="HAMAP" id="MF_00534">
    <property type="entry name" value="Asn_tRNA_synth"/>
    <property type="match status" value="1"/>
</dbReference>
<dbReference type="InterPro" id="IPR004364">
    <property type="entry name" value="Aa-tRNA-synt_II"/>
</dbReference>
<dbReference type="InterPro" id="IPR006195">
    <property type="entry name" value="aa-tRNA-synth_II"/>
</dbReference>
<dbReference type="InterPro" id="IPR045864">
    <property type="entry name" value="aa-tRNA-synth_II/BPL/LPL"/>
</dbReference>
<dbReference type="InterPro" id="IPR004522">
    <property type="entry name" value="Asn-tRNA-ligase"/>
</dbReference>
<dbReference type="InterPro" id="IPR002312">
    <property type="entry name" value="Asp/Asn-tRNA-synth_IIb"/>
</dbReference>
<dbReference type="InterPro" id="IPR012340">
    <property type="entry name" value="NA-bd_OB-fold"/>
</dbReference>
<dbReference type="InterPro" id="IPR004365">
    <property type="entry name" value="NA-bd_OB_tRNA"/>
</dbReference>
<dbReference type="NCBIfam" id="TIGR00457">
    <property type="entry name" value="asnS"/>
    <property type="match status" value="1"/>
</dbReference>
<dbReference type="NCBIfam" id="NF003037">
    <property type="entry name" value="PRK03932.1"/>
    <property type="match status" value="1"/>
</dbReference>
<dbReference type="PANTHER" id="PTHR22594:SF34">
    <property type="entry name" value="ASPARAGINE--TRNA LIGASE, MITOCHONDRIAL-RELATED"/>
    <property type="match status" value="1"/>
</dbReference>
<dbReference type="PANTHER" id="PTHR22594">
    <property type="entry name" value="ASPARTYL/LYSYL-TRNA SYNTHETASE"/>
    <property type="match status" value="1"/>
</dbReference>
<dbReference type="Pfam" id="PF00152">
    <property type="entry name" value="tRNA-synt_2"/>
    <property type="match status" value="1"/>
</dbReference>
<dbReference type="Pfam" id="PF01336">
    <property type="entry name" value="tRNA_anti-codon"/>
    <property type="match status" value="1"/>
</dbReference>
<dbReference type="PRINTS" id="PR01042">
    <property type="entry name" value="TRNASYNTHASP"/>
</dbReference>
<dbReference type="SUPFAM" id="SSF55681">
    <property type="entry name" value="Class II aaRS and biotin synthetases"/>
    <property type="match status" value="1"/>
</dbReference>
<dbReference type="SUPFAM" id="SSF50249">
    <property type="entry name" value="Nucleic acid-binding proteins"/>
    <property type="match status" value="1"/>
</dbReference>
<dbReference type="PROSITE" id="PS50862">
    <property type="entry name" value="AA_TRNA_LIGASE_II"/>
    <property type="match status" value="1"/>
</dbReference>
<reference key="1">
    <citation type="journal article" date="2002" name="Mol. Microbiol.">
        <title>Genome sequence of Streptococcus agalactiae, a pathogen causing invasive neonatal disease.</title>
        <authorList>
            <person name="Glaser P."/>
            <person name="Rusniok C."/>
            <person name="Buchrieser C."/>
            <person name="Chevalier F."/>
            <person name="Frangeul L."/>
            <person name="Msadek T."/>
            <person name="Zouine M."/>
            <person name="Couve E."/>
            <person name="Lalioui L."/>
            <person name="Poyart C."/>
            <person name="Trieu-Cuot P."/>
            <person name="Kunst F."/>
        </authorList>
    </citation>
    <scope>NUCLEOTIDE SEQUENCE [LARGE SCALE GENOMIC DNA]</scope>
    <source>
        <strain>NEM316</strain>
    </source>
</reference>
<feature type="chain" id="PRO_0000176457" description="Asparagine--tRNA ligase">
    <location>
        <begin position="1"/>
        <end position="448"/>
    </location>
</feature>
<keyword id="KW-0030">Aminoacyl-tRNA synthetase</keyword>
<keyword id="KW-0067">ATP-binding</keyword>
<keyword id="KW-0963">Cytoplasm</keyword>
<keyword id="KW-0436">Ligase</keyword>
<keyword id="KW-0547">Nucleotide-binding</keyword>
<keyword id="KW-0648">Protein biosynthesis</keyword>
<comment type="catalytic activity">
    <reaction evidence="1">
        <text>tRNA(Asn) + L-asparagine + ATP = L-asparaginyl-tRNA(Asn) + AMP + diphosphate + H(+)</text>
        <dbReference type="Rhea" id="RHEA:11180"/>
        <dbReference type="Rhea" id="RHEA-COMP:9659"/>
        <dbReference type="Rhea" id="RHEA-COMP:9674"/>
        <dbReference type="ChEBI" id="CHEBI:15378"/>
        <dbReference type="ChEBI" id="CHEBI:30616"/>
        <dbReference type="ChEBI" id="CHEBI:33019"/>
        <dbReference type="ChEBI" id="CHEBI:58048"/>
        <dbReference type="ChEBI" id="CHEBI:78442"/>
        <dbReference type="ChEBI" id="CHEBI:78515"/>
        <dbReference type="ChEBI" id="CHEBI:456215"/>
        <dbReference type="EC" id="6.1.1.22"/>
    </reaction>
</comment>
<comment type="subunit">
    <text evidence="1">Homodimer.</text>
</comment>
<comment type="subcellular location">
    <subcellularLocation>
        <location evidence="1">Cytoplasm</location>
    </subcellularLocation>
</comment>
<comment type="similarity">
    <text evidence="1">Belongs to the class-II aminoacyl-tRNA synthetase family.</text>
</comment>